<feature type="chain" id="PRO_0000146175" description="Small ribosomal subunit protein uS12">
    <location>
        <begin position="1"/>
        <end position="138"/>
    </location>
</feature>
<feature type="region of interest" description="Disordered" evidence="3">
    <location>
        <begin position="33"/>
        <end position="55"/>
    </location>
</feature>
<feature type="modified residue" description="3-methylthioaspartic acid" evidence="1">
    <location>
        <position position="102"/>
    </location>
</feature>
<organism>
    <name type="scientific">Bacillus licheniformis (strain ATCC 14580 / DSM 13 / JCM 2505 / CCUG 7422 / NBRC 12200 / NCIMB 9375 / NCTC 10341 / NRRL NRS-1264 / Gibson 46)</name>
    <dbReference type="NCBI Taxonomy" id="279010"/>
    <lineage>
        <taxon>Bacteria</taxon>
        <taxon>Bacillati</taxon>
        <taxon>Bacillota</taxon>
        <taxon>Bacilli</taxon>
        <taxon>Bacillales</taxon>
        <taxon>Bacillaceae</taxon>
        <taxon>Bacillus</taxon>
    </lineage>
</organism>
<proteinExistence type="inferred from homology"/>
<protein>
    <recommendedName>
        <fullName evidence="2">Small ribosomal subunit protein uS12</fullName>
    </recommendedName>
    <alternativeName>
        <fullName evidence="4">30S ribosomal protein S12</fullName>
    </alternativeName>
</protein>
<keyword id="KW-0488">Methylation</keyword>
<keyword id="KW-1185">Reference proteome</keyword>
<keyword id="KW-0687">Ribonucleoprotein</keyword>
<keyword id="KW-0689">Ribosomal protein</keyword>
<keyword id="KW-0694">RNA-binding</keyword>
<keyword id="KW-0699">rRNA-binding</keyword>
<keyword id="KW-0820">tRNA-binding</keyword>
<sequence>MPTINQLVRKGRVSKVETSKSPALNKGYNSFKKEHTNVSSPQKRGVCTRVGTMTPKKPNSALRKYARVRLTNGIEVTAYIPGIGHNLQEHSVVLIRGGRVKDLPGVRYHIVRGALDTAGVENRAQGRSKYGTKRPKKK</sequence>
<gene>
    <name evidence="2" type="primary">rpsL</name>
    <name type="ordered locus">BLi00128</name>
    <name type="ordered locus">BL01060</name>
</gene>
<evidence type="ECO:0000250" key="1"/>
<evidence type="ECO:0000255" key="2">
    <source>
        <dbReference type="HAMAP-Rule" id="MF_00403"/>
    </source>
</evidence>
<evidence type="ECO:0000256" key="3">
    <source>
        <dbReference type="SAM" id="MobiDB-lite"/>
    </source>
</evidence>
<evidence type="ECO:0000305" key="4"/>
<comment type="function">
    <text evidence="2">With S4 and S5 plays an important role in translational accuracy.</text>
</comment>
<comment type="function">
    <text evidence="2">Interacts with and stabilizes bases of the 16S rRNA that are involved in tRNA selection in the A site and with the mRNA backbone. Located at the interface of the 30S and 50S subunits, it traverses the body of the 30S subunit contacting proteins on the other side and probably holding the rRNA structure together. The combined cluster of proteins S8, S12 and S17 appears to hold together the shoulder and platform of the 30S subunit.</text>
</comment>
<comment type="subunit">
    <text evidence="2">Part of the 30S ribosomal subunit. Contacts proteins S8 and S17. May interact with IF1 in the 30S initiation complex.</text>
</comment>
<comment type="similarity">
    <text evidence="2">Belongs to the universal ribosomal protein uS12 family.</text>
</comment>
<accession>Q65PB2</accession>
<accession>Q62ZQ1</accession>
<reference key="1">
    <citation type="journal article" date="2004" name="J. Mol. Microbiol. Biotechnol.">
        <title>The complete genome sequence of Bacillus licheniformis DSM13, an organism with great industrial potential.</title>
        <authorList>
            <person name="Veith B."/>
            <person name="Herzberg C."/>
            <person name="Steckel S."/>
            <person name="Feesche J."/>
            <person name="Maurer K.H."/>
            <person name="Ehrenreich P."/>
            <person name="Baeumer S."/>
            <person name="Henne A."/>
            <person name="Liesegang H."/>
            <person name="Merkl R."/>
            <person name="Ehrenreich A."/>
            <person name="Gottschalk G."/>
        </authorList>
    </citation>
    <scope>NUCLEOTIDE SEQUENCE [LARGE SCALE GENOMIC DNA]</scope>
    <source>
        <strain>ATCC 14580 / DSM 13 / JCM 2505 / CCUG 7422 / NBRC 12200 / NCIMB 9375 / NCTC 10341 / NRRL NRS-1264 / Gibson 46</strain>
    </source>
</reference>
<reference key="2">
    <citation type="journal article" date="2004" name="Genome Biol.">
        <title>Complete genome sequence of the industrial bacterium Bacillus licheniformis and comparisons with closely related Bacillus species.</title>
        <authorList>
            <person name="Rey M.W."/>
            <person name="Ramaiya P."/>
            <person name="Nelson B.A."/>
            <person name="Brody-Karpin S.D."/>
            <person name="Zaretsky E.J."/>
            <person name="Tang M."/>
            <person name="Lopez de Leon A."/>
            <person name="Xiang H."/>
            <person name="Gusti V."/>
            <person name="Clausen I.G."/>
            <person name="Olsen P.B."/>
            <person name="Rasmussen M.D."/>
            <person name="Andersen J.T."/>
            <person name="Joergensen P.L."/>
            <person name="Larsen T.S."/>
            <person name="Sorokin A."/>
            <person name="Bolotin A."/>
            <person name="Lapidus A."/>
            <person name="Galleron N."/>
            <person name="Ehrlich S.D."/>
            <person name="Berka R.M."/>
        </authorList>
    </citation>
    <scope>NUCLEOTIDE SEQUENCE [LARGE SCALE GENOMIC DNA]</scope>
    <source>
        <strain>ATCC 14580 / DSM 13 / JCM 2505 / CCUG 7422 / NBRC 12200 / NCIMB 9375 / NCTC 10341 / NRRL NRS-1264 / Gibson 46</strain>
    </source>
</reference>
<dbReference type="EMBL" id="AE017333">
    <property type="protein sequence ID" value="AAU39102.1"/>
    <property type="molecule type" value="Genomic_DNA"/>
</dbReference>
<dbReference type="EMBL" id="CP000002">
    <property type="protein sequence ID" value="AAU21757.1"/>
    <property type="molecule type" value="Genomic_DNA"/>
</dbReference>
<dbReference type="RefSeq" id="WP_003178315.1">
    <property type="nucleotide sequence ID" value="NC_006322.1"/>
</dbReference>
<dbReference type="SMR" id="Q65PB2"/>
<dbReference type="STRING" id="279010.BL01060"/>
<dbReference type="GeneID" id="92858908"/>
<dbReference type="KEGG" id="bld:BLi00128"/>
<dbReference type="KEGG" id="bli:BL01060"/>
<dbReference type="eggNOG" id="COG0048">
    <property type="taxonomic scope" value="Bacteria"/>
</dbReference>
<dbReference type="HOGENOM" id="CLU_104295_1_2_9"/>
<dbReference type="Proteomes" id="UP000000606">
    <property type="component" value="Chromosome"/>
</dbReference>
<dbReference type="GO" id="GO:0015935">
    <property type="term" value="C:small ribosomal subunit"/>
    <property type="evidence" value="ECO:0007669"/>
    <property type="project" value="InterPro"/>
</dbReference>
<dbReference type="GO" id="GO:0019843">
    <property type="term" value="F:rRNA binding"/>
    <property type="evidence" value="ECO:0007669"/>
    <property type="project" value="UniProtKB-UniRule"/>
</dbReference>
<dbReference type="GO" id="GO:0003735">
    <property type="term" value="F:structural constituent of ribosome"/>
    <property type="evidence" value="ECO:0007669"/>
    <property type="project" value="InterPro"/>
</dbReference>
<dbReference type="GO" id="GO:0000049">
    <property type="term" value="F:tRNA binding"/>
    <property type="evidence" value="ECO:0007669"/>
    <property type="project" value="UniProtKB-UniRule"/>
</dbReference>
<dbReference type="GO" id="GO:0006412">
    <property type="term" value="P:translation"/>
    <property type="evidence" value="ECO:0007669"/>
    <property type="project" value="UniProtKB-UniRule"/>
</dbReference>
<dbReference type="CDD" id="cd03368">
    <property type="entry name" value="Ribosomal_S12"/>
    <property type="match status" value="1"/>
</dbReference>
<dbReference type="FunFam" id="2.40.50.140:FF:000001">
    <property type="entry name" value="30S ribosomal protein S12"/>
    <property type="match status" value="1"/>
</dbReference>
<dbReference type="Gene3D" id="2.40.50.140">
    <property type="entry name" value="Nucleic acid-binding proteins"/>
    <property type="match status" value="1"/>
</dbReference>
<dbReference type="HAMAP" id="MF_00403_B">
    <property type="entry name" value="Ribosomal_uS12_B"/>
    <property type="match status" value="1"/>
</dbReference>
<dbReference type="InterPro" id="IPR012340">
    <property type="entry name" value="NA-bd_OB-fold"/>
</dbReference>
<dbReference type="InterPro" id="IPR006032">
    <property type="entry name" value="Ribosomal_uS12"/>
</dbReference>
<dbReference type="InterPro" id="IPR005679">
    <property type="entry name" value="Ribosomal_uS12_bac"/>
</dbReference>
<dbReference type="NCBIfam" id="TIGR00981">
    <property type="entry name" value="rpsL_bact"/>
    <property type="match status" value="1"/>
</dbReference>
<dbReference type="PANTHER" id="PTHR11652">
    <property type="entry name" value="30S RIBOSOMAL PROTEIN S12 FAMILY MEMBER"/>
    <property type="match status" value="1"/>
</dbReference>
<dbReference type="Pfam" id="PF00164">
    <property type="entry name" value="Ribosom_S12_S23"/>
    <property type="match status" value="1"/>
</dbReference>
<dbReference type="PRINTS" id="PR01034">
    <property type="entry name" value="RIBOSOMALS12"/>
</dbReference>
<dbReference type="SUPFAM" id="SSF50249">
    <property type="entry name" value="Nucleic acid-binding proteins"/>
    <property type="match status" value="1"/>
</dbReference>
<dbReference type="PROSITE" id="PS00055">
    <property type="entry name" value="RIBOSOMAL_S12"/>
    <property type="match status" value="1"/>
</dbReference>
<name>RS12_BACLD</name>